<accession>D6RCP7</accession>
<reference key="1">
    <citation type="journal article" date="2005" name="Nature">
        <title>Generation and annotation of the DNA sequences of human chromosomes 2 and 4.</title>
        <authorList>
            <person name="Hillier L.W."/>
            <person name="Graves T.A."/>
            <person name="Fulton R.S."/>
            <person name="Fulton L.A."/>
            <person name="Pepin K.H."/>
            <person name="Minx P."/>
            <person name="Wagner-McPherson C."/>
            <person name="Layman D."/>
            <person name="Wylie K."/>
            <person name="Sekhon M."/>
            <person name="Becker M.C."/>
            <person name="Fewell G.A."/>
            <person name="Delehaunty K.D."/>
            <person name="Miner T.L."/>
            <person name="Nash W.E."/>
            <person name="Kremitzki C."/>
            <person name="Oddy L."/>
            <person name="Du H."/>
            <person name="Sun H."/>
            <person name="Bradshaw-Cordum H."/>
            <person name="Ali J."/>
            <person name="Carter J."/>
            <person name="Cordes M."/>
            <person name="Harris A."/>
            <person name="Isak A."/>
            <person name="van Brunt A."/>
            <person name="Nguyen C."/>
            <person name="Du F."/>
            <person name="Courtney L."/>
            <person name="Kalicki J."/>
            <person name="Ozersky P."/>
            <person name="Abbott S."/>
            <person name="Armstrong J."/>
            <person name="Belter E.A."/>
            <person name="Caruso L."/>
            <person name="Cedroni M."/>
            <person name="Cotton M."/>
            <person name="Davidson T."/>
            <person name="Desai A."/>
            <person name="Elliott G."/>
            <person name="Erb T."/>
            <person name="Fronick C."/>
            <person name="Gaige T."/>
            <person name="Haakenson W."/>
            <person name="Haglund K."/>
            <person name="Holmes A."/>
            <person name="Harkins R."/>
            <person name="Kim K."/>
            <person name="Kruchowski S.S."/>
            <person name="Strong C.M."/>
            <person name="Grewal N."/>
            <person name="Goyea E."/>
            <person name="Hou S."/>
            <person name="Levy A."/>
            <person name="Martinka S."/>
            <person name="Mead K."/>
            <person name="McLellan M.D."/>
            <person name="Meyer R."/>
            <person name="Randall-Maher J."/>
            <person name="Tomlinson C."/>
            <person name="Dauphin-Kohlberg S."/>
            <person name="Kozlowicz-Reilly A."/>
            <person name="Shah N."/>
            <person name="Swearengen-Shahid S."/>
            <person name="Snider J."/>
            <person name="Strong J.T."/>
            <person name="Thompson J."/>
            <person name="Yoakum M."/>
            <person name="Leonard S."/>
            <person name="Pearman C."/>
            <person name="Trani L."/>
            <person name="Radionenko M."/>
            <person name="Waligorski J.E."/>
            <person name="Wang C."/>
            <person name="Rock S.M."/>
            <person name="Tin-Wollam A.-M."/>
            <person name="Maupin R."/>
            <person name="Latreille P."/>
            <person name="Wendl M.C."/>
            <person name="Yang S.-P."/>
            <person name="Pohl C."/>
            <person name="Wallis J.W."/>
            <person name="Spieth J."/>
            <person name="Bieri T.A."/>
            <person name="Berkowicz N."/>
            <person name="Nelson J.O."/>
            <person name="Osborne J."/>
            <person name="Ding L."/>
            <person name="Meyer R."/>
            <person name="Sabo A."/>
            <person name="Shotland Y."/>
            <person name="Sinha P."/>
            <person name="Wohldmann P.E."/>
            <person name="Cook L.L."/>
            <person name="Hickenbotham M.T."/>
            <person name="Eldred J."/>
            <person name="Williams D."/>
            <person name="Jones T.A."/>
            <person name="She X."/>
            <person name="Ciccarelli F.D."/>
            <person name="Izaurralde E."/>
            <person name="Taylor J."/>
            <person name="Schmutz J."/>
            <person name="Myers R.M."/>
            <person name="Cox D.R."/>
            <person name="Huang X."/>
            <person name="McPherson J.D."/>
            <person name="Mardis E.R."/>
            <person name="Clifton S.W."/>
            <person name="Warren W.C."/>
            <person name="Chinwalla A.T."/>
            <person name="Eddy S.R."/>
            <person name="Marra M.A."/>
            <person name="Ovcharenko I."/>
            <person name="Furey T.S."/>
            <person name="Miller W."/>
            <person name="Eichler E.E."/>
            <person name="Bork P."/>
            <person name="Suyama M."/>
            <person name="Torrents D."/>
            <person name="Waterston R.H."/>
            <person name="Wilson R.K."/>
        </authorList>
    </citation>
    <scope>NUCLEOTIDE SEQUENCE [LARGE SCALE GENOMIC DNA]</scope>
</reference>
<protein>
    <recommendedName>
        <fullName>Ubiquitin carboxyl-terminal hydrolase 17-like protein 19</fullName>
        <ecNumber>3.4.19.12</ecNumber>
    </recommendedName>
</protein>
<dbReference type="EC" id="3.4.19.12"/>
<dbReference type="EMBL" id="AC108519">
    <property type="status" value="NOT_ANNOTATED_CDS"/>
    <property type="molecule type" value="Genomic_DNA"/>
</dbReference>
<dbReference type="CCDS" id="CCDS59460.1"/>
<dbReference type="RefSeq" id="NP_001243789.1">
    <property type="nucleotide sequence ID" value="NM_001256860.1"/>
</dbReference>
<dbReference type="SMR" id="D6RCP7"/>
<dbReference type="BioGRID" id="939065">
    <property type="interactions" value="2"/>
</dbReference>
<dbReference type="FunCoup" id="D6RCP7">
    <property type="interactions" value="415"/>
</dbReference>
<dbReference type="IntAct" id="D6RCP7">
    <property type="interactions" value="1"/>
</dbReference>
<dbReference type="STRING" id="9606.ENSP00000425582"/>
<dbReference type="MEROPS" id="C19.A82"/>
<dbReference type="MEROPS" id="C19.A94"/>
<dbReference type="BioMuta" id="USP17L19"/>
<dbReference type="jPOST" id="D6RCP7"/>
<dbReference type="MassIVE" id="D6RCP7"/>
<dbReference type="PaxDb" id="9606-ENSP00000425582"/>
<dbReference type="Antibodypedia" id="77312">
    <property type="antibodies" value="3 antibodies from 1 providers"/>
</dbReference>
<dbReference type="DNASU" id="100287404"/>
<dbReference type="Ensembl" id="ENST00000515566.1">
    <property type="protein sequence ID" value="ENSP00000425582.1"/>
    <property type="gene ID" value="ENSG00000248920.3"/>
</dbReference>
<dbReference type="GeneID" id="100287404"/>
<dbReference type="KEGG" id="hsa:100287404"/>
<dbReference type="MANE-Select" id="ENST00000515566.1">
    <property type="protein sequence ID" value="ENSP00000425582.1"/>
    <property type="RefSeq nucleotide sequence ID" value="NM_001256860.1"/>
    <property type="RefSeq protein sequence ID" value="NP_001243789.1"/>
</dbReference>
<dbReference type="UCSC" id="uc031sdm.1">
    <property type="organism name" value="human"/>
</dbReference>
<dbReference type="AGR" id="HGNC:44447"/>
<dbReference type="CTD" id="100287404"/>
<dbReference type="GeneCards" id="USP17L19"/>
<dbReference type="HGNC" id="HGNC:44447">
    <property type="gene designation" value="USP17L19"/>
</dbReference>
<dbReference type="HPA" id="ENSG00000248920">
    <property type="expression patterns" value="Not detected"/>
</dbReference>
<dbReference type="neXtProt" id="NX_D6RCP7"/>
<dbReference type="VEuPathDB" id="HostDB:ENSG00000248920"/>
<dbReference type="eggNOG" id="KOG1865">
    <property type="taxonomic scope" value="Eukaryota"/>
</dbReference>
<dbReference type="GeneTree" id="ENSGT00940000161948"/>
<dbReference type="InParanoid" id="D6RCP7"/>
<dbReference type="OMA" id="KCTRERT"/>
<dbReference type="OrthoDB" id="8832at9604"/>
<dbReference type="PAN-GO" id="D6RCP7">
    <property type="GO annotations" value="6 GO annotations based on evolutionary models"/>
</dbReference>
<dbReference type="PhylomeDB" id="D6RCP7"/>
<dbReference type="TreeFam" id="TF315281"/>
<dbReference type="PathwayCommons" id="D6RCP7"/>
<dbReference type="Reactome" id="R-HSA-5689880">
    <property type="pathway name" value="Ub-specific processing proteases"/>
</dbReference>
<dbReference type="BioGRID-ORCS" id="100287404">
    <property type="hits" value="29 hits in 216 CRISPR screens"/>
</dbReference>
<dbReference type="GenomeRNAi" id="100287404"/>
<dbReference type="Pharos" id="D6RCP7">
    <property type="development level" value="Tdark"/>
</dbReference>
<dbReference type="PRO" id="PR:D6RCP7"/>
<dbReference type="Proteomes" id="UP000005640">
    <property type="component" value="Chromosome 4"/>
</dbReference>
<dbReference type="RNAct" id="D6RCP7">
    <property type="molecule type" value="protein"/>
</dbReference>
<dbReference type="GO" id="GO:0005829">
    <property type="term" value="C:cytosol"/>
    <property type="evidence" value="ECO:0000318"/>
    <property type="project" value="GO_Central"/>
</dbReference>
<dbReference type="GO" id="GO:0005783">
    <property type="term" value="C:endoplasmic reticulum"/>
    <property type="evidence" value="ECO:0007669"/>
    <property type="project" value="UniProtKB-SubCell"/>
</dbReference>
<dbReference type="GO" id="GO:0005634">
    <property type="term" value="C:nucleus"/>
    <property type="evidence" value="ECO:0000318"/>
    <property type="project" value="GO_Central"/>
</dbReference>
<dbReference type="GO" id="GO:0004843">
    <property type="term" value="F:cysteine-type deubiquitinase activity"/>
    <property type="evidence" value="ECO:0000318"/>
    <property type="project" value="GO_Central"/>
</dbReference>
<dbReference type="GO" id="GO:0016579">
    <property type="term" value="P:protein deubiquitination"/>
    <property type="evidence" value="ECO:0007669"/>
    <property type="project" value="InterPro"/>
</dbReference>
<dbReference type="GO" id="GO:0006508">
    <property type="term" value="P:proteolysis"/>
    <property type="evidence" value="ECO:0007669"/>
    <property type="project" value="UniProtKB-KW"/>
</dbReference>
<dbReference type="GO" id="GO:0042981">
    <property type="term" value="P:regulation of apoptotic process"/>
    <property type="evidence" value="ECO:0000318"/>
    <property type="project" value="GO_Central"/>
</dbReference>
<dbReference type="GO" id="GO:0031647">
    <property type="term" value="P:regulation of protein stability"/>
    <property type="evidence" value="ECO:0000318"/>
    <property type="project" value="GO_Central"/>
</dbReference>
<dbReference type="CDD" id="cd02661">
    <property type="entry name" value="Peptidase_C19E"/>
    <property type="match status" value="1"/>
</dbReference>
<dbReference type="FunFam" id="3.90.70.10:FF:000070">
    <property type="entry name" value="Ubiquitin carboxyl-terminal hydrolase 17-like protein 17"/>
    <property type="match status" value="1"/>
</dbReference>
<dbReference type="Gene3D" id="3.90.70.10">
    <property type="entry name" value="Cysteine proteinases"/>
    <property type="match status" value="1"/>
</dbReference>
<dbReference type="InterPro" id="IPR006861">
    <property type="entry name" value="HABP4_PAIRBP1-bd"/>
</dbReference>
<dbReference type="InterPro" id="IPR038765">
    <property type="entry name" value="Papain-like_cys_pep_sf"/>
</dbReference>
<dbReference type="InterPro" id="IPR050164">
    <property type="entry name" value="Peptidase_C19"/>
</dbReference>
<dbReference type="InterPro" id="IPR001394">
    <property type="entry name" value="Peptidase_C19_UCH"/>
</dbReference>
<dbReference type="InterPro" id="IPR018200">
    <property type="entry name" value="USP_CS"/>
</dbReference>
<dbReference type="InterPro" id="IPR028889">
    <property type="entry name" value="USP_dom"/>
</dbReference>
<dbReference type="PANTHER" id="PTHR24006:SF651">
    <property type="entry name" value="INACTIVE UBIQUITIN CARBOXYL-TERMINAL HYDROLASE 17-LIKE PROTEIN 4-RELATED"/>
    <property type="match status" value="1"/>
</dbReference>
<dbReference type="PANTHER" id="PTHR24006">
    <property type="entry name" value="UBIQUITIN CARBOXYL-TERMINAL HYDROLASE"/>
    <property type="match status" value="1"/>
</dbReference>
<dbReference type="Pfam" id="PF04774">
    <property type="entry name" value="HABP4_PAI-RBP1"/>
    <property type="match status" value="1"/>
</dbReference>
<dbReference type="Pfam" id="PF00443">
    <property type="entry name" value="UCH"/>
    <property type="match status" value="1"/>
</dbReference>
<dbReference type="SUPFAM" id="SSF54001">
    <property type="entry name" value="Cysteine proteinases"/>
    <property type="match status" value="1"/>
</dbReference>
<dbReference type="PROSITE" id="PS00972">
    <property type="entry name" value="USP_1"/>
    <property type="match status" value="1"/>
</dbReference>
<dbReference type="PROSITE" id="PS00973">
    <property type="entry name" value="USP_2"/>
    <property type="match status" value="1"/>
</dbReference>
<dbReference type="PROSITE" id="PS50235">
    <property type="entry name" value="USP_3"/>
    <property type="match status" value="1"/>
</dbReference>
<proteinExistence type="inferred from homology"/>
<sequence length="530" mass="59658">MEEDSLYLGGEWQFNHFSKLTSSRPDAAFAEIQRTSLPEKSPLSCETRVDLCDDLAPVARQLAPREKLPLSSRRPAAVGAGLQNMGNTCYVNASLQCLTYTPPLANYMLSREHSQTCHRHKGCMLCTMQAHITRALHNPGHVIQPSQALAAGFHRGKQEDAHEFLMFTVDAMKKACLPGHKQVDHHSKDTTLIHQIFGGYWRSQIKCLHCHGISDTFDPYLDIALDIQAAQSVQQALEQLVKPEELNGENAYHCGVCLQRAPASKTLTLHTSAKVLILVLKRFSDVTGNKIAKNVQYPECLDMQPYMSQTNTGPLVYVLYAVLVHAGWSCHNGHYFSYVKAQEGQWYKMDDAEVTASSITSVLSQQAYVLFYIQKSEWERHSESVSRGREPRALGAEDTDRRATQGELKRDHPCLQAPELDEHLVERATQESTLDHWKFLQEQNKTKPEFNVRKVEGTLPPDVLVIHQSKYKCGMKNHHPEQQSSLLKLSSTTPTHQESMNTGTLASLRGRARRSKGKNKHSKRALLVCQ</sequence>
<comment type="function">
    <text evidence="1">Deubiquitinating enzyme that removes conjugated ubiquitin from specific proteins to regulate different cellular processes that may include cell proliferation, progression through the cell cycle, apoptosis, cell migration, and the cellular response to viral infection.</text>
</comment>
<comment type="catalytic activity">
    <reaction>
        <text>Thiol-dependent hydrolysis of ester, thioester, amide, peptide and isopeptide bonds formed by the C-terminal Gly of ubiquitin (a 76-residue protein attached to proteins as an intracellular targeting signal).</text>
        <dbReference type="EC" id="3.4.19.12"/>
    </reaction>
</comment>
<comment type="subcellular location">
    <subcellularLocation>
        <location evidence="1">Nucleus</location>
    </subcellularLocation>
    <subcellularLocation>
        <location evidence="1">Endoplasmic reticulum</location>
    </subcellularLocation>
</comment>
<comment type="similarity">
    <text evidence="5">Belongs to the peptidase C19 family. USP17 subfamily.</text>
</comment>
<comment type="caution">
    <text evidence="5">The RS447 megasatellite DNA is a highly polymorphic conserved tandem repetitive sequence which contains a copy of the USP17 gene. It is present with an interindividual variation in copy number, ranging from 20 to 103, and can be found in the genome on chromosome 4 and chromosome 8. The high similarity between the UPS17-like genes makes it impossible to specifically assign data to a particular gene of the family. Oligonucleotides designed in RNAi experiments are for instance not specific for a given UPS17-like gene.</text>
</comment>
<feature type="chain" id="PRO_0000421093" description="Ubiquitin carboxyl-terminal hydrolase 17-like protein 19">
    <location>
        <begin position="1"/>
        <end position="530"/>
    </location>
</feature>
<feature type="domain" description="USP">
    <location>
        <begin position="80"/>
        <end position="375"/>
    </location>
</feature>
<feature type="region of interest" description="Disordered" evidence="4">
    <location>
        <begin position="382"/>
        <end position="413"/>
    </location>
</feature>
<feature type="region of interest" description="Disordered" evidence="4">
    <location>
        <begin position="476"/>
        <end position="530"/>
    </location>
</feature>
<feature type="compositionally biased region" description="Basic and acidic residues" evidence="4">
    <location>
        <begin position="382"/>
        <end position="392"/>
    </location>
</feature>
<feature type="compositionally biased region" description="Basic and acidic residues" evidence="4">
    <location>
        <begin position="398"/>
        <end position="413"/>
    </location>
</feature>
<feature type="compositionally biased region" description="Low complexity" evidence="4">
    <location>
        <begin position="484"/>
        <end position="495"/>
    </location>
</feature>
<feature type="compositionally biased region" description="Polar residues" evidence="4">
    <location>
        <begin position="496"/>
        <end position="505"/>
    </location>
</feature>
<feature type="compositionally biased region" description="Basic residues" evidence="4">
    <location>
        <begin position="510"/>
        <end position="524"/>
    </location>
</feature>
<feature type="active site" description="Nucleophile" evidence="2 3">
    <location>
        <position position="89"/>
    </location>
</feature>
<feature type="active site" description="Proton acceptor" evidence="2 3">
    <location>
        <position position="334"/>
    </location>
</feature>
<keyword id="KW-0256">Endoplasmic reticulum</keyword>
<keyword id="KW-0378">Hydrolase</keyword>
<keyword id="KW-0539">Nucleus</keyword>
<keyword id="KW-0645">Protease</keyword>
<keyword id="KW-1185">Reference proteome</keyword>
<keyword id="KW-0788">Thiol protease</keyword>
<keyword id="KW-0833">Ubl conjugation pathway</keyword>
<organism>
    <name type="scientific">Homo sapiens</name>
    <name type="common">Human</name>
    <dbReference type="NCBI Taxonomy" id="9606"/>
    <lineage>
        <taxon>Eukaryota</taxon>
        <taxon>Metazoa</taxon>
        <taxon>Chordata</taxon>
        <taxon>Craniata</taxon>
        <taxon>Vertebrata</taxon>
        <taxon>Euteleostomi</taxon>
        <taxon>Mammalia</taxon>
        <taxon>Eutheria</taxon>
        <taxon>Euarchontoglires</taxon>
        <taxon>Primates</taxon>
        <taxon>Haplorrhini</taxon>
        <taxon>Catarrhini</taxon>
        <taxon>Hominidae</taxon>
        <taxon>Homo</taxon>
    </lineage>
</organism>
<gene>
    <name type="primary">USP17L19</name>
</gene>
<name>U17LJ_HUMAN</name>
<evidence type="ECO:0000250" key="1"/>
<evidence type="ECO:0000255" key="2">
    <source>
        <dbReference type="PROSITE-ProRule" id="PRU10092"/>
    </source>
</evidence>
<evidence type="ECO:0000255" key="3">
    <source>
        <dbReference type="PROSITE-ProRule" id="PRU10093"/>
    </source>
</evidence>
<evidence type="ECO:0000256" key="4">
    <source>
        <dbReference type="SAM" id="MobiDB-lite"/>
    </source>
</evidence>
<evidence type="ECO:0000305" key="5"/>